<comment type="function">
    <text evidence="2">Catalyzes hydrolytic cleavage of carbon-halogen bonds in halogenated aliphatic compounds, leading to the formation of the corresponding primary alcohols, halide ions and protons.</text>
</comment>
<comment type="catalytic activity">
    <reaction evidence="2">
        <text>1-haloalkane + H2O = a halide anion + a primary alcohol + H(+)</text>
        <dbReference type="Rhea" id="RHEA:19081"/>
        <dbReference type="ChEBI" id="CHEBI:15377"/>
        <dbReference type="ChEBI" id="CHEBI:15378"/>
        <dbReference type="ChEBI" id="CHEBI:15734"/>
        <dbReference type="ChEBI" id="CHEBI:16042"/>
        <dbReference type="ChEBI" id="CHEBI:18060"/>
        <dbReference type="EC" id="3.8.1.5"/>
    </reaction>
</comment>
<comment type="subunit">
    <text evidence="2">Monomer.</text>
</comment>
<comment type="similarity">
    <text evidence="2">Belongs to the haloalkane dehalogenase family. Type 2 subfamily.</text>
</comment>
<evidence type="ECO:0000255" key="1"/>
<evidence type="ECO:0000255" key="2">
    <source>
        <dbReference type="HAMAP-Rule" id="MF_01231"/>
    </source>
</evidence>
<reference key="1">
    <citation type="journal article" date="2009" name="Vaccine">
        <title>Whole genome sequence analysis of Mycobacterium bovis bacillus Calmette-Guerin (BCG) Tokyo 172: a comparative study of BCG vaccine substrains.</title>
        <authorList>
            <person name="Seki M."/>
            <person name="Honda I."/>
            <person name="Fujita I."/>
            <person name="Yano I."/>
            <person name="Yamamoto S."/>
            <person name="Koyama A."/>
        </authorList>
    </citation>
    <scope>NUCLEOTIDE SEQUENCE [LARGE SCALE GENOMIC DNA]</scope>
    <source>
        <strain>BCG / Tokyo 172 / ATCC 35737 / TMC 1019</strain>
    </source>
</reference>
<accession>C1AF48</accession>
<sequence>MTAFGVEPYGQPKYLEIAGKRMAYIDEGKGDAIVFQHGNPTSSYLWRNIMPHLEGLGRLVACDLIGMGASDKLSPSGPDRYSYGEQRDFLFALWDALDLGDHVVLVLHDWGSALGFDWANQHRDRVQGIAFMEAIVTPMTWADWPPAVRGVFQGFRSPQGEPMALEHNIFVERVLPGAILRQLSDEEMNHYRRPFVNGGEDRRPTLSWPRNLPIDGEPAEVVALVNEYRSWLEETDMPKLFINAEPGAIITGRIRDYVRSWPNQTEITVPGVHFVQEDSPEEIGAAIAQFVRQLRSAAGV</sequence>
<organism>
    <name type="scientific">Mycobacterium bovis (strain BCG / Tokyo 172 / ATCC 35737 / TMC 1019)</name>
    <dbReference type="NCBI Taxonomy" id="561275"/>
    <lineage>
        <taxon>Bacteria</taxon>
        <taxon>Bacillati</taxon>
        <taxon>Actinomycetota</taxon>
        <taxon>Actinomycetes</taxon>
        <taxon>Mycobacteriales</taxon>
        <taxon>Mycobacteriaceae</taxon>
        <taxon>Mycobacterium</taxon>
        <taxon>Mycobacterium tuberculosis complex</taxon>
    </lineage>
</organism>
<dbReference type="EC" id="3.8.1.5" evidence="2"/>
<dbReference type="EMBL" id="AP010918">
    <property type="protein sequence ID" value="BAH26877.1"/>
    <property type="molecule type" value="Genomic_DNA"/>
</dbReference>
<dbReference type="RefSeq" id="WP_011799277.1">
    <property type="nucleotide sequence ID" value="NZ_CP014566.1"/>
</dbReference>
<dbReference type="SMR" id="C1AF48"/>
<dbReference type="ESTHER" id="myctu-linb">
    <property type="family name" value="Haloalkane_dehalogenase-HLD2"/>
</dbReference>
<dbReference type="KEGG" id="mbt:JTY_2596"/>
<dbReference type="HOGENOM" id="CLU_020336_13_3_11"/>
<dbReference type="GO" id="GO:0018786">
    <property type="term" value="F:haloalkane dehalogenase activity"/>
    <property type="evidence" value="ECO:0007669"/>
    <property type="project" value="UniProtKB-UniRule"/>
</dbReference>
<dbReference type="Gene3D" id="3.40.50.1820">
    <property type="entry name" value="alpha/beta hydrolase"/>
    <property type="match status" value="1"/>
</dbReference>
<dbReference type="HAMAP" id="MF_01231">
    <property type="entry name" value="Haloalk_dehal_type2"/>
    <property type="match status" value="1"/>
</dbReference>
<dbReference type="InterPro" id="IPR000073">
    <property type="entry name" value="AB_hydrolase_1"/>
</dbReference>
<dbReference type="InterPro" id="IPR029058">
    <property type="entry name" value="AB_hydrolase_fold"/>
</dbReference>
<dbReference type="InterPro" id="IPR000639">
    <property type="entry name" value="Epox_hydrolase-like"/>
</dbReference>
<dbReference type="InterPro" id="IPR023594">
    <property type="entry name" value="Haloalkane_dehalogenase_2"/>
</dbReference>
<dbReference type="NCBIfam" id="NF002938">
    <property type="entry name" value="PRK03592.1"/>
    <property type="match status" value="1"/>
</dbReference>
<dbReference type="PANTHER" id="PTHR43329">
    <property type="entry name" value="EPOXIDE HYDROLASE"/>
    <property type="match status" value="1"/>
</dbReference>
<dbReference type="Pfam" id="PF00561">
    <property type="entry name" value="Abhydrolase_1"/>
    <property type="match status" value="1"/>
</dbReference>
<dbReference type="PRINTS" id="PR00412">
    <property type="entry name" value="EPOXHYDRLASE"/>
</dbReference>
<dbReference type="SUPFAM" id="SSF53474">
    <property type="entry name" value="alpha/beta-Hydrolases"/>
    <property type="match status" value="1"/>
</dbReference>
<name>DHAA_MYCBT</name>
<protein>
    <recommendedName>
        <fullName evidence="2">Haloalkane dehalogenase</fullName>
        <ecNumber evidence="2">3.8.1.5</ecNumber>
    </recommendedName>
</protein>
<feature type="chain" id="PRO_1000164972" description="Haloalkane dehalogenase">
    <location>
        <begin position="1"/>
        <end position="300"/>
    </location>
</feature>
<feature type="domain" description="AB hydrolase-1" evidence="1">
    <location>
        <begin position="32"/>
        <end position="155"/>
    </location>
</feature>
<feature type="active site" description="Nucleophile" evidence="2">
    <location>
        <position position="109"/>
    </location>
</feature>
<feature type="active site" description="Proton donor" evidence="2">
    <location>
        <position position="133"/>
    </location>
</feature>
<feature type="active site" description="Proton acceptor" evidence="2">
    <location>
        <position position="273"/>
    </location>
</feature>
<proteinExistence type="inferred from homology"/>
<keyword id="KW-0378">Hydrolase</keyword>
<gene>
    <name evidence="2" type="primary">dhaA</name>
    <name type="ordered locus">JTY_2596</name>
</gene>